<accession>Q4A8V0</accession>
<protein>
    <recommendedName>
        <fullName evidence="1">Probable endonuclease 4</fullName>
        <ecNumber evidence="1">3.1.21.2</ecNumber>
    </recommendedName>
    <alternativeName>
        <fullName evidence="1">Endodeoxyribonuclease IV</fullName>
    </alternativeName>
    <alternativeName>
        <fullName evidence="1">Endonuclease IV</fullName>
    </alternativeName>
</protein>
<evidence type="ECO:0000255" key="1">
    <source>
        <dbReference type="HAMAP-Rule" id="MF_00152"/>
    </source>
</evidence>
<proteinExistence type="inferred from homology"/>
<gene>
    <name evidence="1" type="primary">nfo</name>
    <name type="ordered locus">MHP7448_0062</name>
</gene>
<sequence length="276" mass="31532">MIKIGSHVRFRKPDYLFGAIQESLENKANAAMIFLGPPQSTFRVKPENYKFQDYQKHFFKQIPPEDIIVHAPYIINPASPIKAQFSNDFLVKEIEKINYIGAKFLVLHPGFFTSFTKEVAKKQLISSLKSILEKTKNVILLLETMSGKGSEMCANFEEIVEIVEAVESPRIGVCLDTCHVWDAGYDLKNFPEFCKELRKTRLINYLKVIHLNDSLSPLGSKKDRHANIGKGFIGLETLRKIVFDPLFANIPKILETPYVDNKPIYDQEIALLLKKV</sequence>
<dbReference type="EC" id="3.1.21.2" evidence="1"/>
<dbReference type="EMBL" id="AE017244">
    <property type="protein sequence ID" value="AAZ53439.1"/>
    <property type="molecule type" value="Genomic_DNA"/>
</dbReference>
<dbReference type="RefSeq" id="WP_011289982.1">
    <property type="nucleotide sequence ID" value="NC_007332.1"/>
</dbReference>
<dbReference type="SMR" id="Q4A8V0"/>
<dbReference type="KEGG" id="mhp:MHP7448_0062"/>
<dbReference type="HOGENOM" id="CLU_025885_0_4_14"/>
<dbReference type="Proteomes" id="UP000000553">
    <property type="component" value="Chromosome"/>
</dbReference>
<dbReference type="GO" id="GO:0008833">
    <property type="term" value="F:deoxyribonuclease IV (phage-T4-induced) activity"/>
    <property type="evidence" value="ECO:0007669"/>
    <property type="project" value="UniProtKB-UniRule"/>
</dbReference>
<dbReference type="GO" id="GO:0003677">
    <property type="term" value="F:DNA binding"/>
    <property type="evidence" value="ECO:0007669"/>
    <property type="project" value="InterPro"/>
</dbReference>
<dbReference type="GO" id="GO:0003906">
    <property type="term" value="F:DNA-(apurinic or apyrimidinic site) endonuclease activity"/>
    <property type="evidence" value="ECO:0007669"/>
    <property type="project" value="TreeGrafter"/>
</dbReference>
<dbReference type="GO" id="GO:0008081">
    <property type="term" value="F:phosphoric diester hydrolase activity"/>
    <property type="evidence" value="ECO:0007669"/>
    <property type="project" value="TreeGrafter"/>
</dbReference>
<dbReference type="GO" id="GO:0008270">
    <property type="term" value="F:zinc ion binding"/>
    <property type="evidence" value="ECO:0007669"/>
    <property type="project" value="UniProtKB-UniRule"/>
</dbReference>
<dbReference type="GO" id="GO:0006284">
    <property type="term" value="P:base-excision repair"/>
    <property type="evidence" value="ECO:0007669"/>
    <property type="project" value="TreeGrafter"/>
</dbReference>
<dbReference type="CDD" id="cd00019">
    <property type="entry name" value="AP2Ec"/>
    <property type="match status" value="1"/>
</dbReference>
<dbReference type="FunFam" id="3.20.20.150:FF:000001">
    <property type="entry name" value="Probable endonuclease 4"/>
    <property type="match status" value="1"/>
</dbReference>
<dbReference type="Gene3D" id="3.20.20.150">
    <property type="entry name" value="Divalent-metal-dependent TIM barrel enzymes"/>
    <property type="match status" value="1"/>
</dbReference>
<dbReference type="HAMAP" id="MF_00152">
    <property type="entry name" value="Nfo"/>
    <property type="match status" value="1"/>
</dbReference>
<dbReference type="InterPro" id="IPR001719">
    <property type="entry name" value="AP_endonuc_2"/>
</dbReference>
<dbReference type="InterPro" id="IPR018246">
    <property type="entry name" value="AP_endonuc_F2_Zn_BS"/>
</dbReference>
<dbReference type="InterPro" id="IPR036237">
    <property type="entry name" value="Xyl_isomerase-like_sf"/>
</dbReference>
<dbReference type="InterPro" id="IPR013022">
    <property type="entry name" value="Xyl_isomerase-like_TIM-brl"/>
</dbReference>
<dbReference type="NCBIfam" id="TIGR00587">
    <property type="entry name" value="nfo"/>
    <property type="match status" value="1"/>
</dbReference>
<dbReference type="NCBIfam" id="NF002196">
    <property type="entry name" value="PRK01060.1-1"/>
    <property type="match status" value="1"/>
</dbReference>
<dbReference type="PANTHER" id="PTHR21445:SF0">
    <property type="entry name" value="APURINIC-APYRIMIDINIC ENDONUCLEASE"/>
    <property type="match status" value="1"/>
</dbReference>
<dbReference type="PANTHER" id="PTHR21445">
    <property type="entry name" value="ENDONUCLEASE IV ENDODEOXYRIBONUCLEASE IV"/>
    <property type="match status" value="1"/>
</dbReference>
<dbReference type="Pfam" id="PF01261">
    <property type="entry name" value="AP_endonuc_2"/>
    <property type="match status" value="1"/>
</dbReference>
<dbReference type="SMART" id="SM00518">
    <property type="entry name" value="AP2Ec"/>
    <property type="match status" value="1"/>
</dbReference>
<dbReference type="SUPFAM" id="SSF51658">
    <property type="entry name" value="Xylose isomerase-like"/>
    <property type="match status" value="1"/>
</dbReference>
<dbReference type="PROSITE" id="PS00729">
    <property type="entry name" value="AP_NUCLEASE_F2_1"/>
    <property type="match status" value="1"/>
</dbReference>
<dbReference type="PROSITE" id="PS00730">
    <property type="entry name" value="AP_NUCLEASE_F2_2"/>
    <property type="match status" value="1"/>
</dbReference>
<dbReference type="PROSITE" id="PS00731">
    <property type="entry name" value="AP_NUCLEASE_F2_3"/>
    <property type="match status" value="1"/>
</dbReference>
<dbReference type="PROSITE" id="PS51432">
    <property type="entry name" value="AP_NUCLEASE_F2_4"/>
    <property type="match status" value="1"/>
</dbReference>
<feature type="chain" id="PRO_1000011320" description="Probable endonuclease 4">
    <location>
        <begin position="1"/>
        <end position="276"/>
    </location>
</feature>
<feature type="binding site" evidence="1">
    <location>
        <position position="70"/>
    </location>
    <ligand>
        <name>Zn(2+)</name>
        <dbReference type="ChEBI" id="CHEBI:29105"/>
        <label>1</label>
    </ligand>
</feature>
<feature type="binding site" evidence="1">
    <location>
        <position position="108"/>
    </location>
    <ligand>
        <name>Zn(2+)</name>
        <dbReference type="ChEBI" id="CHEBI:29105"/>
        <label>1</label>
    </ligand>
</feature>
<feature type="binding site" evidence="1">
    <location>
        <position position="143"/>
    </location>
    <ligand>
        <name>Zn(2+)</name>
        <dbReference type="ChEBI" id="CHEBI:29105"/>
        <label>1</label>
    </ligand>
</feature>
<feature type="binding site" evidence="1">
    <location>
        <position position="143"/>
    </location>
    <ligand>
        <name>Zn(2+)</name>
        <dbReference type="ChEBI" id="CHEBI:29105"/>
        <label>2</label>
    </ligand>
</feature>
<feature type="binding site" evidence="1">
    <location>
        <position position="176"/>
    </location>
    <ligand>
        <name>Zn(2+)</name>
        <dbReference type="ChEBI" id="CHEBI:29105"/>
        <label>2</label>
    </ligand>
</feature>
<feature type="binding site" evidence="1">
    <location>
        <position position="179"/>
    </location>
    <ligand>
        <name>Zn(2+)</name>
        <dbReference type="ChEBI" id="CHEBI:29105"/>
        <label>3</label>
    </ligand>
</feature>
<feature type="binding site" evidence="1">
    <location>
        <position position="210"/>
    </location>
    <ligand>
        <name>Zn(2+)</name>
        <dbReference type="ChEBI" id="CHEBI:29105"/>
        <label>2</label>
    </ligand>
</feature>
<feature type="binding site" evidence="1">
    <location>
        <position position="223"/>
    </location>
    <ligand>
        <name>Zn(2+)</name>
        <dbReference type="ChEBI" id="CHEBI:29105"/>
        <label>3</label>
    </ligand>
</feature>
<feature type="binding site" evidence="1">
    <location>
        <position position="225"/>
    </location>
    <ligand>
        <name>Zn(2+)</name>
        <dbReference type="ChEBI" id="CHEBI:29105"/>
        <label>3</label>
    </ligand>
</feature>
<feature type="binding site" evidence="1">
    <location>
        <position position="255"/>
    </location>
    <ligand>
        <name>Zn(2+)</name>
        <dbReference type="ChEBI" id="CHEBI:29105"/>
        <label>2</label>
    </ligand>
</feature>
<name>END4_MESH7</name>
<reference key="1">
    <citation type="journal article" date="2005" name="J. Bacteriol.">
        <title>Swine and poultry pathogens: the complete genome sequences of two strains of Mycoplasma hyopneumoniae and a strain of Mycoplasma synoviae.</title>
        <authorList>
            <person name="Vasconcelos A.T.R."/>
            <person name="Ferreira H.B."/>
            <person name="Bizarro C.V."/>
            <person name="Bonatto S.L."/>
            <person name="Carvalho M.O."/>
            <person name="Pinto P.M."/>
            <person name="Almeida D.F."/>
            <person name="Almeida L.G.P."/>
            <person name="Almeida R."/>
            <person name="Alves-Junior L."/>
            <person name="Assuncao E.N."/>
            <person name="Azevedo V.A.C."/>
            <person name="Bogo M.R."/>
            <person name="Brigido M.M."/>
            <person name="Brocchi M."/>
            <person name="Burity H.A."/>
            <person name="Camargo A.A."/>
            <person name="Camargo S.S."/>
            <person name="Carepo M.S."/>
            <person name="Carraro D.M."/>
            <person name="de Mattos Cascardo J.C."/>
            <person name="Castro L.A."/>
            <person name="Cavalcanti G."/>
            <person name="Chemale G."/>
            <person name="Collevatti R.G."/>
            <person name="Cunha C.W."/>
            <person name="Dallagiovanna B."/>
            <person name="Dambros B.P."/>
            <person name="Dellagostin O.A."/>
            <person name="Falcao C."/>
            <person name="Fantinatti-Garboggini F."/>
            <person name="Felipe M.S.S."/>
            <person name="Fiorentin L."/>
            <person name="Franco G.R."/>
            <person name="Freitas N.S.A."/>
            <person name="Frias D."/>
            <person name="Grangeiro T.B."/>
            <person name="Grisard E.C."/>
            <person name="Guimaraes C.T."/>
            <person name="Hungria M."/>
            <person name="Jardim S.N."/>
            <person name="Krieger M.A."/>
            <person name="Laurino J.P."/>
            <person name="Lima L.F.A."/>
            <person name="Lopes M.I."/>
            <person name="Loreto E.L.S."/>
            <person name="Madeira H.M.F."/>
            <person name="Manfio G.P."/>
            <person name="Maranhao A.Q."/>
            <person name="Martinkovics C.T."/>
            <person name="Medeiros S.R.B."/>
            <person name="Moreira M.A.M."/>
            <person name="Neiva M."/>
            <person name="Ramalho-Neto C.E."/>
            <person name="Nicolas M.F."/>
            <person name="Oliveira S.C."/>
            <person name="Paixao R.F.C."/>
            <person name="Pedrosa F.O."/>
            <person name="Pena S.D.J."/>
            <person name="Pereira M."/>
            <person name="Pereira-Ferrari L."/>
            <person name="Piffer I."/>
            <person name="Pinto L.S."/>
            <person name="Potrich D.P."/>
            <person name="Salim A.C.M."/>
            <person name="Santos F.R."/>
            <person name="Schmitt R."/>
            <person name="Schneider M.P.C."/>
            <person name="Schrank A."/>
            <person name="Schrank I.S."/>
            <person name="Schuck A.F."/>
            <person name="Seuanez H.N."/>
            <person name="Silva D.W."/>
            <person name="Silva R."/>
            <person name="Silva S.C."/>
            <person name="Soares C.M.A."/>
            <person name="Souza K.R.L."/>
            <person name="Souza R.C."/>
            <person name="Staats C.C."/>
            <person name="Steffens M.B.R."/>
            <person name="Teixeira S.M.R."/>
            <person name="Urmenyi T.P."/>
            <person name="Vainstein M.H."/>
            <person name="Zuccherato L.W."/>
            <person name="Simpson A.J.G."/>
            <person name="Zaha A."/>
        </authorList>
    </citation>
    <scope>NUCLEOTIDE SEQUENCE [LARGE SCALE GENOMIC DNA]</scope>
    <source>
        <strain>7448</strain>
    </source>
</reference>
<keyword id="KW-0227">DNA damage</keyword>
<keyword id="KW-0234">DNA repair</keyword>
<keyword id="KW-0255">Endonuclease</keyword>
<keyword id="KW-0378">Hydrolase</keyword>
<keyword id="KW-0479">Metal-binding</keyword>
<keyword id="KW-0540">Nuclease</keyword>
<keyword id="KW-0862">Zinc</keyword>
<comment type="function">
    <text evidence="1">Endonuclease IV plays a role in DNA repair. It cleaves phosphodiester bonds at apurinic or apyrimidinic (AP) sites, generating a 3'-hydroxyl group and a 5'-terminal sugar phosphate.</text>
</comment>
<comment type="catalytic activity">
    <reaction evidence="1">
        <text>Endonucleolytic cleavage to 5'-phosphooligonucleotide end-products.</text>
        <dbReference type="EC" id="3.1.21.2"/>
    </reaction>
</comment>
<comment type="cofactor">
    <cofactor evidence="1">
        <name>Zn(2+)</name>
        <dbReference type="ChEBI" id="CHEBI:29105"/>
    </cofactor>
    <text evidence="1">Binds 3 Zn(2+) ions.</text>
</comment>
<comment type="similarity">
    <text evidence="1">Belongs to the AP endonuclease 2 family.</text>
</comment>
<organism>
    <name type="scientific">Mesomycoplasma hyopneumoniae (strain 7448)</name>
    <name type="common">Mycoplasma hyopneumoniae</name>
    <dbReference type="NCBI Taxonomy" id="262722"/>
    <lineage>
        <taxon>Bacteria</taxon>
        <taxon>Bacillati</taxon>
        <taxon>Mycoplasmatota</taxon>
        <taxon>Mycoplasmoidales</taxon>
        <taxon>Metamycoplasmataceae</taxon>
        <taxon>Mesomycoplasma</taxon>
    </lineage>
</organism>